<reference key="1">
    <citation type="journal article" date="2004" name="Nature">
        <title>Genome sequence of the Brown Norway rat yields insights into mammalian evolution.</title>
        <authorList>
            <person name="Gibbs R.A."/>
            <person name="Weinstock G.M."/>
            <person name="Metzker M.L."/>
            <person name="Muzny D.M."/>
            <person name="Sodergren E.J."/>
            <person name="Scherer S."/>
            <person name="Scott G."/>
            <person name="Steffen D."/>
            <person name="Worley K.C."/>
            <person name="Burch P.E."/>
            <person name="Okwuonu G."/>
            <person name="Hines S."/>
            <person name="Lewis L."/>
            <person name="Deramo C."/>
            <person name="Delgado O."/>
            <person name="Dugan-Rocha S."/>
            <person name="Miner G."/>
            <person name="Morgan M."/>
            <person name="Hawes A."/>
            <person name="Gill R."/>
            <person name="Holt R.A."/>
            <person name="Adams M.D."/>
            <person name="Amanatides P.G."/>
            <person name="Baden-Tillson H."/>
            <person name="Barnstead M."/>
            <person name="Chin S."/>
            <person name="Evans C.A."/>
            <person name="Ferriera S."/>
            <person name="Fosler C."/>
            <person name="Glodek A."/>
            <person name="Gu Z."/>
            <person name="Jennings D."/>
            <person name="Kraft C.L."/>
            <person name="Nguyen T."/>
            <person name="Pfannkoch C.M."/>
            <person name="Sitter C."/>
            <person name="Sutton G.G."/>
            <person name="Venter J.C."/>
            <person name="Woodage T."/>
            <person name="Smith D."/>
            <person name="Lee H.-M."/>
            <person name="Gustafson E."/>
            <person name="Cahill P."/>
            <person name="Kana A."/>
            <person name="Doucette-Stamm L."/>
            <person name="Weinstock K."/>
            <person name="Fechtel K."/>
            <person name="Weiss R.B."/>
            <person name="Dunn D.M."/>
            <person name="Green E.D."/>
            <person name="Blakesley R.W."/>
            <person name="Bouffard G.G."/>
            <person name="De Jong P.J."/>
            <person name="Osoegawa K."/>
            <person name="Zhu B."/>
            <person name="Marra M."/>
            <person name="Schein J."/>
            <person name="Bosdet I."/>
            <person name="Fjell C."/>
            <person name="Jones S."/>
            <person name="Krzywinski M."/>
            <person name="Mathewson C."/>
            <person name="Siddiqui A."/>
            <person name="Wye N."/>
            <person name="McPherson J."/>
            <person name="Zhao S."/>
            <person name="Fraser C.M."/>
            <person name="Shetty J."/>
            <person name="Shatsman S."/>
            <person name="Geer K."/>
            <person name="Chen Y."/>
            <person name="Abramzon S."/>
            <person name="Nierman W.C."/>
            <person name="Havlak P.H."/>
            <person name="Chen R."/>
            <person name="Durbin K.J."/>
            <person name="Egan A."/>
            <person name="Ren Y."/>
            <person name="Song X.-Z."/>
            <person name="Li B."/>
            <person name="Liu Y."/>
            <person name="Qin X."/>
            <person name="Cawley S."/>
            <person name="Cooney A.J."/>
            <person name="D'Souza L.M."/>
            <person name="Martin K."/>
            <person name="Wu J.Q."/>
            <person name="Gonzalez-Garay M.L."/>
            <person name="Jackson A.R."/>
            <person name="Kalafus K.J."/>
            <person name="McLeod M.P."/>
            <person name="Milosavljevic A."/>
            <person name="Virk D."/>
            <person name="Volkov A."/>
            <person name="Wheeler D.A."/>
            <person name="Zhang Z."/>
            <person name="Bailey J.A."/>
            <person name="Eichler E.E."/>
            <person name="Tuzun E."/>
            <person name="Birney E."/>
            <person name="Mongin E."/>
            <person name="Ureta-Vidal A."/>
            <person name="Woodwark C."/>
            <person name="Zdobnov E."/>
            <person name="Bork P."/>
            <person name="Suyama M."/>
            <person name="Torrents D."/>
            <person name="Alexandersson M."/>
            <person name="Trask B.J."/>
            <person name="Young J.M."/>
            <person name="Huang H."/>
            <person name="Wang H."/>
            <person name="Xing H."/>
            <person name="Daniels S."/>
            <person name="Gietzen D."/>
            <person name="Schmidt J."/>
            <person name="Stevens K."/>
            <person name="Vitt U."/>
            <person name="Wingrove J."/>
            <person name="Camara F."/>
            <person name="Mar Alba M."/>
            <person name="Abril J.F."/>
            <person name="Guigo R."/>
            <person name="Smit A."/>
            <person name="Dubchak I."/>
            <person name="Rubin E.M."/>
            <person name="Couronne O."/>
            <person name="Poliakov A."/>
            <person name="Huebner N."/>
            <person name="Ganten D."/>
            <person name="Goesele C."/>
            <person name="Hummel O."/>
            <person name="Kreitler T."/>
            <person name="Lee Y.-A."/>
            <person name="Monti J."/>
            <person name="Schulz H."/>
            <person name="Zimdahl H."/>
            <person name="Himmelbauer H."/>
            <person name="Lehrach H."/>
            <person name="Jacob H.J."/>
            <person name="Bromberg S."/>
            <person name="Gullings-Handley J."/>
            <person name="Jensen-Seaman M.I."/>
            <person name="Kwitek A.E."/>
            <person name="Lazar J."/>
            <person name="Pasko D."/>
            <person name="Tonellato P.J."/>
            <person name="Twigger S."/>
            <person name="Ponting C.P."/>
            <person name="Duarte J.M."/>
            <person name="Rice S."/>
            <person name="Goodstadt L."/>
            <person name="Beatson S.A."/>
            <person name="Emes R.D."/>
            <person name="Winter E.E."/>
            <person name="Webber C."/>
            <person name="Brandt P."/>
            <person name="Nyakatura G."/>
            <person name="Adetobi M."/>
            <person name="Chiaromonte F."/>
            <person name="Elnitski L."/>
            <person name="Eswara P."/>
            <person name="Hardison R.C."/>
            <person name="Hou M."/>
            <person name="Kolbe D."/>
            <person name="Makova K."/>
            <person name="Miller W."/>
            <person name="Nekrutenko A."/>
            <person name="Riemer C."/>
            <person name="Schwartz S."/>
            <person name="Taylor J."/>
            <person name="Yang S."/>
            <person name="Zhang Y."/>
            <person name="Lindpaintner K."/>
            <person name="Andrews T.D."/>
            <person name="Caccamo M."/>
            <person name="Clamp M."/>
            <person name="Clarke L."/>
            <person name="Curwen V."/>
            <person name="Durbin R.M."/>
            <person name="Eyras E."/>
            <person name="Searle S.M."/>
            <person name="Cooper G.M."/>
            <person name="Batzoglou S."/>
            <person name="Brudno M."/>
            <person name="Sidow A."/>
            <person name="Stone E.A."/>
            <person name="Payseur B.A."/>
            <person name="Bourque G."/>
            <person name="Lopez-Otin C."/>
            <person name="Puente X.S."/>
            <person name="Chakrabarti K."/>
            <person name="Chatterji S."/>
            <person name="Dewey C."/>
            <person name="Pachter L."/>
            <person name="Bray N."/>
            <person name="Yap V.B."/>
            <person name="Caspi A."/>
            <person name="Tesler G."/>
            <person name="Pevzner P.A."/>
            <person name="Haussler D."/>
            <person name="Roskin K.M."/>
            <person name="Baertsch R."/>
            <person name="Clawson H."/>
            <person name="Furey T.S."/>
            <person name="Hinrichs A.S."/>
            <person name="Karolchik D."/>
            <person name="Kent W.J."/>
            <person name="Rosenbloom K.R."/>
            <person name="Trumbower H."/>
            <person name="Weirauch M."/>
            <person name="Cooper D.N."/>
            <person name="Stenson P.D."/>
            <person name="Ma B."/>
            <person name="Brent M."/>
            <person name="Arumugam M."/>
            <person name="Shteynberg D."/>
            <person name="Copley R.R."/>
            <person name="Taylor M.S."/>
            <person name="Riethman H."/>
            <person name="Mudunuri U."/>
            <person name="Peterson J."/>
            <person name="Guyer M."/>
            <person name="Felsenfeld A."/>
            <person name="Old S."/>
            <person name="Mockrin S."/>
            <person name="Collins F.S."/>
        </authorList>
    </citation>
    <scope>NUCLEOTIDE SEQUENCE [LARGE SCALE GENOMIC DNA]</scope>
    <source>
        <strain>Brown Norway</strain>
    </source>
</reference>
<reference key="2">
    <citation type="journal article" date="2008" name="Dev. Dyn.">
        <title>Expression of the diaphanous-related formin proteins mDia1 and mDia2 in the rat testis.</title>
        <authorList>
            <person name="Mironova E."/>
            <person name="Millette C.F."/>
        </authorList>
    </citation>
    <scope>TISSUE SPECIFICITY</scope>
</reference>
<proteinExistence type="evidence at protein level"/>
<gene>
    <name evidence="11" type="primary">Diaph1</name>
    <name type="synonym">Diap1</name>
</gene>
<dbReference type="EMBL" id="AABR07031736">
    <property type="status" value="NOT_ANNOTATED_CDS"/>
    <property type="molecule type" value="Genomic_DNA"/>
</dbReference>
<dbReference type="EMBL" id="AABR07031737">
    <property type="status" value="NOT_ANNOTATED_CDS"/>
    <property type="molecule type" value="Genomic_DNA"/>
</dbReference>
<dbReference type="EMBL" id="AABR07031738">
    <property type="status" value="NOT_ANNOTATED_CDS"/>
    <property type="molecule type" value="Genomic_DNA"/>
</dbReference>
<dbReference type="FunCoup" id="F1M775">
    <property type="interactions" value="1428"/>
</dbReference>
<dbReference type="IntAct" id="F1M775">
    <property type="interactions" value="2"/>
</dbReference>
<dbReference type="STRING" id="10116.ENSRNOP00000057176"/>
<dbReference type="iPTMnet" id="F1M775"/>
<dbReference type="PhosphoSitePlus" id="F1M775"/>
<dbReference type="jPOST" id="F1M775"/>
<dbReference type="PaxDb" id="10116-ENSRNOP00000057176"/>
<dbReference type="PeptideAtlas" id="F1M775"/>
<dbReference type="UCSC" id="RGD:1310707">
    <property type="organism name" value="rat"/>
</dbReference>
<dbReference type="AGR" id="RGD:1310707"/>
<dbReference type="RGD" id="1310707">
    <property type="gene designation" value="Diaph1"/>
</dbReference>
<dbReference type="VEuPathDB" id="HostDB:ENSRNOG00000019688"/>
<dbReference type="eggNOG" id="KOG1924">
    <property type="taxonomic scope" value="Eukaryota"/>
</dbReference>
<dbReference type="HOGENOM" id="CLU_002356_0_0_1"/>
<dbReference type="InParanoid" id="F1M775"/>
<dbReference type="Reactome" id="R-RNO-5663220">
    <property type="pathway name" value="RHO GTPases Activate Formins"/>
</dbReference>
<dbReference type="Reactome" id="R-RNO-6785631">
    <property type="pathway name" value="ERBB2 Regulates Cell Motility"/>
</dbReference>
<dbReference type="Reactome" id="R-RNO-6798695">
    <property type="pathway name" value="Neutrophil degranulation"/>
</dbReference>
<dbReference type="Reactome" id="R-RNO-8980692">
    <property type="pathway name" value="RHOA GTPase cycle"/>
</dbReference>
<dbReference type="Reactome" id="R-RNO-9013026">
    <property type="pathway name" value="RHOB GTPase cycle"/>
</dbReference>
<dbReference type="Reactome" id="R-RNO-9013405">
    <property type="pathway name" value="RHOD GTPase cycle"/>
</dbReference>
<dbReference type="Reactome" id="R-RNO-9035034">
    <property type="pathway name" value="RHOF GTPase cycle"/>
</dbReference>
<dbReference type="PRO" id="PR:F1M775"/>
<dbReference type="Proteomes" id="UP000002494">
    <property type="component" value="Chromosome 18"/>
</dbReference>
<dbReference type="Bgee" id="ENSRNOG00000019688">
    <property type="expression patterns" value="Expressed in lung and 19 other cell types or tissues"/>
</dbReference>
<dbReference type="GO" id="GO:0005884">
    <property type="term" value="C:actin filament"/>
    <property type="evidence" value="ECO:0000318"/>
    <property type="project" value="GO_Central"/>
</dbReference>
<dbReference type="GO" id="GO:0005903">
    <property type="term" value="C:brush border"/>
    <property type="evidence" value="ECO:0000266"/>
    <property type="project" value="RGD"/>
</dbReference>
<dbReference type="GO" id="GO:0005813">
    <property type="term" value="C:centrosome"/>
    <property type="evidence" value="ECO:0007669"/>
    <property type="project" value="UniProtKB-SubCell"/>
</dbReference>
<dbReference type="GO" id="GO:0005737">
    <property type="term" value="C:cytoplasm"/>
    <property type="evidence" value="ECO:0000250"/>
    <property type="project" value="UniProtKB"/>
</dbReference>
<dbReference type="GO" id="GO:0015630">
    <property type="term" value="C:microtubule cytoskeleton"/>
    <property type="evidence" value="ECO:0000266"/>
    <property type="project" value="RGD"/>
</dbReference>
<dbReference type="GO" id="GO:0072686">
    <property type="term" value="C:mitotic spindle"/>
    <property type="evidence" value="ECO:0000266"/>
    <property type="project" value="RGD"/>
</dbReference>
<dbReference type="GO" id="GO:0043005">
    <property type="term" value="C:neuron projection"/>
    <property type="evidence" value="ECO:0000266"/>
    <property type="project" value="RGD"/>
</dbReference>
<dbReference type="GO" id="GO:0005634">
    <property type="term" value="C:nucleus"/>
    <property type="evidence" value="ECO:0000250"/>
    <property type="project" value="UniProtKB"/>
</dbReference>
<dbReference type="GO" id="GO:0098793">
    <property type="term" value="C:presynapse"/>
    <property type="evidence" value="ECO:0007669"/>
    <property type="project" value="GOC"/>
</dbReference>
<dbReference type="GO" id="GO:0032587">
    <property type="term" value="C:ruffle membrane"/>
    <property type="evidence" value="ECO:0000266"/>
    <property type="project" value="RGD"/>
</dbReference>
<dbReference type="GO" id="GO:0005876">
    <property type="term" value="C:spindle microtubule"/>
    <property type="evidence" value="ECO:0000266"/>
    <property type="project" value="RGD"/>
</dbReference>
<dbReference type="GO" id="GO:0003779">
    <property type="term" value="F:actin binding"/>
    <property type="evidence" value="ECO:0000266"/>
    <property type="project" value="RGD"/>
</dbReference>
<dbReference type="GO" id="GO:0042802">
    <property type="term" value="F:identical protein binding"/>
    <property type="evidence" value="ECO:0000266"/>
    <property type="project" value="RGD"/>
</dbReference>
<dbReference type="GO" id="GO:0005522">
    <property type="term" value="F:profilin binding"/>
    <property type="evidence" value="ECO:0000266"/>
    <property type="project" value="RGD"/>
</dbReference>
<dbReference type="GO" id="GO:0031267">
    <property type="term" value="F:small GTPase binding"/>
    <property type="evidence" value="ECO:0000266"/>
    <property type="project" value="RGD"/>
</dbReference>
<dbReference type="GO" id="GO:0044325">
    <property type="term" value="F:transmembrane transporter binding"/>
    <property type="evidence" value="ECO:0000266"/>
    <property type="project" value="RGD"/>
</dbReference>
<dbReference type="GO" id="GO:0030036">
    <property type="term" value="P:actin cytoskeleton organization"/>
    <property type="evidence" value="ECO:0000250"/>
    <property type="project" value="UniProtKB"/>
</dbReference>
<dbReference type="GO" id="GO:0030041">
    <property type="term" value="P:actin filament polymerization"/>
    <property type="evidence" value="ECO:0000250"/>
    <property type="project" value="UniProtKB"/>
</dbReference>
<dbReference type="GO" id="GO:0045010">
    <property type="term" value="P:actin nucleation"/>
    <property type="evidence" value="ECO:0000266"/>
    <property type="project" value="RGD"/>
</dbReference>
<dbReference type="GO" id="GO:0016199">
    <property type="term" value="P:axon midline choice point recognition"/>
    <property type="evidence" value="ECO:0000266"/>
    <property type="project" value="RGD"/>
</dbReference>
<dbReference type="GO" id="GO:0007420">
    <property type="term" value="P:brain development"/>
    <property type="evidence" value="ECO:0000266"/>
    <property type="project" value="RGD"/>
</dbReference>
<dbReference type="GO" id="GO:0071420">
    <property type="term" value="P:cellular response to histamine"/>
    <property type="evidence" value="ECO:0000266"/>
    <property type="project" value="RGD"/>
</dbReference>
<dbReference type="GO" id="GO:0007010">
    <property type="term" value="P:cytoskeleton organization"/>
    <property type="evidence" value="ECO:0000250"/>
    <property type="project" value="UniProtKB"/>
</dbReference>
<dbReference type="GO" id="GO:0048013">
    <property type="term" value="P:ephrin receptor signaling pathway"/>
    <property type="evidence" value="ECO:0000266"/>
    <property type="project" value="RGD"/>
</dbReference>
<dbReference type="GO" id="GO:0010467">
    <property type="term" value="P:gene expression"/>
    <property type="evidence" value="ECO:0000266"/>
    <property type="project" value="RGD"/>
</dbReference>
<dbReference type="GO" id="GO:0071965">
    <property type="term" value="P:multicellular organismal locomotion"/>
    <property type="evidence" value="ECO:0000266"/>
    <property type="project" value="RGD"/>
</dbReference>
<dbReference type="GO" id="GO:0070571">
    <property type="term" value="P:negative regulation of neuron projection regeneration"/>
    <property type="evidence" value="ECO:0000266"/>
    <property type="project" value="RGD"/>
</dbReference>
<dbReference type="GO" id="GO:0031175">
    <property type="term" value="P:neuron projection development"/>
    <property type="evidence" value="ECO:0000266"/>
    <property type="project" value="RGD"/>
</dbReference>
<dbReference type="GO" id="GO:0106028">
    <property type="term" value="P:neuron projection retraction"/>
    <property type="evidence" value="ECO:0000266"/>
    <property type="project" value="RGD"/>
</dbReference>
<dbReference type="GO" id="GO:0030335">
    <property type="term" value="P:positive regulation of cell migration"/>
    <property type="evidence" value="ECO:0000315"/>
    <property type="project" value="RGD"/>
</dbReference>
<dbReference type="GO" id="GO:0008104">
    <property type="term" value="P:protein localization"/>
    <property type="evidence" value="ECO:0000266"/>
    <property type="project" value="RGD"/>
</dbReference>
<dbReference type="GO" id="GO:0035372">
    <property type="term" value="P:protein localization to microtubule"/>
    <property type="evidence" value="ECO:0000266"/>
    <property type="project" value="RGD"/>
</dbReference>
<dbReference type="GO" id="GO:0008360">
    <property type="term" value="P:regulation of cell shape"/>
    <property type="evidence" value="ECO:0000266"/>
    <property type="project" value="RGD"/>
</dbReference>
<dbReference type="GO" id="GO:0051493">
    <property type="term" value="P:regulation of cytoskeleton organization"/>
    <property type="evidence" value="ECO:0000266"/>
    <property type="project" value="RGD"/>
</dbReference>
<dbReference type="GO" id="GO:0032886">
    <property type="term" value="P:regulation of microtubule-based process"/>
    <property type="evidence" value="ECO:0000266"/>
    <property type="project" value="RGD"/>
</dbReference>
<dbReference type="GO" id="GO:0051279">
    <property type="term" value="P:regulation of release of sequestered calcium ion into cytosol"/>
    <property type="evidence" value="ECO:0000266"/>
    <property type="project" value="RGD"/>
</dbReference>
<dbReference type="GO" id="GO:0007605">
    <property type="term" value="P:sensory perception of sound"/>
    <property type="evidence" value="ECO:0007669"/>
    <property type="project" value="UniProtKB-KW"/>
</dbReference>
<dbReference type="GO" id="GO:0048488">
    <property type="term" value="P:synaptic vesicle endocytosis"/>
    <property type="evidence" value="ECO:0000266"/>
    <property type="project" value="RGD"/>
</dbReference>
<dbReference type="FunFam" id="1.25.10.10:FF:000109">
    <property type="entry name" value="Diaphanous homolog 1 (Drosophila)"/>
    <property type="match status" value="1"/>
</dbReference>
<dbReference type="FunFam" id="1.20.58.630:FF:000001">
    <property type="entry name" value="Diaphanous related formin 1"/>
    <property type="match status" value="1"/>
</dbReference>
<dbReference type="FunFam" id="1.20.58.2220:FF:000003">
    <property type="entry name" value="protein diaphanous homolog 1 isoform X2"/>
    <property type="match status" value="1"/>
</dbReference>
<dbReference type="FunFam" id="1.10.238.150:FF:000002">
    <property type="entry name" value="protein diaphanous homolog 2 isoform X2"/>
    <property type="match status" value="1"/>
</dbReference>
<dbReference type="Gene3D" id="1.20.1170.10">
    <property type="match status" value="1"/>
</dbReference>
<dbReference type="Gene3D" id="1.20.58.630">
    <property type="match status" value="1"/>
</dbReference>
<dbReference type="Gene3D" id="6.10.30.30">
    <property type="match status" value="1"/>
</dbReference>
<dbReference type="Gene3D" id="1.10.20.40">
    <property type="entry name" value="Formin, diaphanous GTPase-binding domain"/>
    <property type="match status" value="1"/>
</dbReference>
<dbReference type="Gene3D" id="1.20.58.2220">
    <property type="entry name" value="Formin, FH2 domain"/>
    <property type="match status" value="1"/>
</dbReference>
<dbReference type="Gene3D" id="1.10.238.150">
    <property type="entry name" value="Formin, FH3 diaphanous domain"/>
    <property type="match status" value="1"/>
</dbReference>
<dbReference type="Gene3D" id="1.25.10.10">
    <property type="entry name" value="Leucine-rich Repeat Variant"/>
    <property type="match status" value="1"/>
</dbReference>
<dbReference type="InterPro" id="IPR011989">
    <property type="entry name" value="ARM-like"/>
</dbReference>
<dbReference type="InterPro" id="IPR016024">
    <property type="entry name" value="ARM-type_fold"/>
</dbReference>
<dbReference type="InterPro" id="IPR014767">
    <property type="entry name" value="DAD_dom"/>
</dbReference>
<dbReference type="InterPro" id="IPR044933">
    <property type="entry name" value="DIA_GBD_sf"/>
</dbReference>
<dbReference type="InterPro" id="IPR010465">
    <property type="entry name" value="Drf_DAD"/>
</dbReference>
<dbReference type="InterPro" id="IPR015425">
    <property type="entry name" value="FH2_Formin"/>
</dbReference>
<dbReference type="InterPro" id="IPR042201">
    <property type="entry name" value="FH2_Formin_sf"/>
</dbReference>
<dbReference type="InterPro" id="IPR010472">
    <property type="entry name" value="FH3_dom"/>
</dbReference>
<dbReference type="InterPro" id="IPR051412">
    <property type="entry name" value="Formin_Homology_Diaphanous_sf"/>
</dbReference>
<dbReference type="InterPro" id="IPR014768">
    <property type="entry name" value="GBD/FH3_dom"/>
</dbReference>
<dbReference type="InterPro" id="IPR010473">
    <property type="entry name" value="GTPase-bd"/>
</dbReference>
<dbReference type="PANTHER" id="PTHR45691">
    <property type="entry name" value="PROTEIN DIAPHANOUS"/>
    <property type="match status" value="1"/>
</dbReference>
<dbReference type="PANTHER" id="PTHR45691:SF4">
    <property type="entry name" value="PROTEIN DIAPHANOUS HOMOLOG 1"/>
    <property type="match status" value="1"/>
</dbReference>
<dbReference type="Pfam" id="PF06345">
    <property type="entry name" value="Drf_DAD"/>
    <property type="match status" value="1"/>
</dbReference>
<dbReference type="Pfam" id="PF06346">
    <property type="entry name" value="Drf_FH1"/>
    <property type="match status" value="1"/>
</dbReference>
<dbReference type="Pfam" id="PF06367">
    <property type="entry name" value="Drf_FH3"/>
    <property type="match status" value="1"/>
</dbReference>
<dbReference type="Pfam" id="PF06371">
    <property type="entry name" value="Drf_GBD"/>
    <property type="match status" value="1"/>
</dbReference>
<dbReference type="Pfam" id="PF02181">
    <property type="entry name" value="FH2"/>
    <property type="match status" value="1"/>
</dbReference>
<dbReference type="SMART" id="SM01139">
    <property type="entry name" value="Drf_FH3"/>
    <property type="match status" value="1"/>
</dbReference>
<dbReference type="SMART" id="SM01140">
    <property type="entry name" value="Drf_GBD"/>
    <property type="match status" value="1"/>
</dbReference>
<dbReference type="SMART" id="SM00498">
    <property type="entry name" value="FH2"/>
    <property type="match status" value="1"/>
</dbReference>
<dbReference type="SUPFAM" id="SSF48371">
    <property type="entry name" value="ARM repeat"/>
    <property type="match status" value="1"/>
</dbReference>
<dbReference type="SUPFAM" id="SSF101447">
    <property type="entry name" value="Formin homology 2 domain (FH2 domain)"/>
    <property type="match status" value="1"/>
</dbReference>
<dbReference type="PROSITE" id="PS51231">
    <property type="entry name" value="DAD"/>
    <property type="match status" value="1"/>
</dbReference>
<dbReference type="PROSITE" id="PS51444">
    <property type="entry name" value="FH2"/>
    <property type="match status" value="1"/>
</dbReference>
<dbReference type="PROSITE" id="PS51232">
    <property type="entry name" value="GBD_FH3"/>
    <property type="match status" value="1"/>
</dbReference>
<accession>F1M775</accession>
<evidence type="ECO:0000250" key="1">
    <source>
        <dbReference type="UniProtKB" id="O08808"/>
    </source>
</evidence>
<evidence type="ECO:0000250" key="2">
    <source>
        <dbReference type="UniProtKB" id="O60610"/>
    </source>
</evidence>
<evidence type="ECO:0000255" key="3"/>
<evidence type="ECO:0000255" key="4">
    <source>
        <dbReference type="PROSITE-ProRule" id="PRU00577"/>
    </source>
</evidence>
<evidence type="ECO:0000255" key="5">
    <source>
        <dbReference type="PROSITE-ProRule" id="PRU00579"/>
    </source>
</evidence>
<evidence type="ECO:0000255" key="6">
    <source>
        <dbReference type="PROSITE-ProRule" id="PRU00774"/>
    </source>
</evidence>
<evidence type="ECO:0000256" key="7">
    <source>
        <dbReference type="SAM" id="MobiDB-lite"/>
    </source>
</evidence>
<evidence type="ECO:0000269" key="8">
    <source>
    </source>
</evidence>
<evidence type="ECO:0000303" key="9">
    <source>
    </source>
</evidence>
<evidence type="ECO:0000305" key="10"/>
<evidence type="ECO:0000312" key="11">
    <source>
        <dbReference type="RGD" id="1310707"/>
    </source>
</evidence>
<sequence>MEPSGGGLGPGRGTRDKKKGRSPDELPATGGDGGKHKKFTLKRLMADELERFTSMRIKKEKEKPNSAHRNSSASYGDDPTAQSLQDISDDQVLVLFEQMLVDMNLNEEKQQPLREKDIVIKREMVSQYLHTSKAGMNQKESSRSAMMYIQELRSGLRDMHLLSCLESLRVSLNNNPVSWVQTFGAEGLASLLDILKRLHDEKEETSGNYDSRNQHEIIRCLKAFMNNKFGIKTMLETEEGILLLVRAMDPAVPNMMIDAAKLLSALCILPQPEDMNERVLEAMTERAEMEEVERFQPLLDGLKSGTSIALKVGCLQLINALITPAEELDFRVHIRSELMRLGLHQVLQELREIDNDDMRVQLNVFDEQGDEDFFDLKGRLDDIRMEMDDFGEVFQIILNTVKDSKAEPHFLSILQHLLLVRNDYEARPQYYKLIEECVSQIVLHKNGTDPDFKCRHLQIDIEGLVDQMIDKTKVEKSEAKATELEKKLDSELTARHELQVEMKKMENDFEQKLQDLQGEKDALDSEKQQITTQKQDLEAEVSKLTGEVAKLSKELEDAKKEMASLSAVAVAPSVSSSAAVPQAPPLPGTSGTVIPPPPPPPLPGGAVPPPPPPPLPAGTGIPPPPPLPGGACISSSPQLFGSTAIPPPPPLPGATAIPPPPPLPGDTAIPPPPPLPGXTAIPPPPPLPGATGVPPPPPPLPGSVGVPPPPPLPGGPGLPPPPPPFPGAPGIPPPPPGMGVPPPPPFGFGIPAAPVLPFGLTPKKVYKPEVQLRRPNWSKFVAEDLSQDCFWTKVKEDRFENNELFAKLTLAFSAQTKTSLAKKDQEGGEEKKSVQKKKVKELKVLDSKTAQNLSIFLGSFRMPYQEIKNVILEVNEAVLTESMIQNLIKQMPEPEQLKMLSELKEEYDDLAESEQFGVVMGTVPRLRPRLNAILFKLQFSEQVENIKPEIVSVTAACEELRKSENFSSLLELTLLVGNYMNAGSRNAGAFGFNISFLCKLRDTKSADQKMTLLHFLAELCETDHPDVLKFPDELAHVEKASRVSAENLQKNLDQMKKQIADVERDVQNFPAATDEKDKFVEKMTSFVKDAQEQYNKLRMMHSNMETLYKELGDYFVFDPKKLSVEEFFMDLHNFRNMFLQAVKENQKRRETEEKMRRAKLAKEKAEKERLEKQQKREQLIDMNAEGDETGVMDSLLEALQSGAAFRRKRGPRQVNRKAGCAVTSLLASELTKDDAVAASSAKVPKKSEGVTTILEEAKELVGRAS</sequence>
<feature type="chain" id="PRO_0000445557" description="Protein diaphanous homolog 1">
    <location>
        <begin position="1"/>
        <end position="1265"/>
    </location>
</feature>
<feature type="domain" description="GBD/FH3" evidence="5">
    <location>
        <begin position="84"/>
        <end position="449"/>
    </location>
</feature>
<feature type="domain" description="FH1" evidence="3">
    <location>
        <begin position="625"/>
        <end position="757"/>
    </location>
</feature>
<feature type="domain" description="FH2" evidence="6">
    <location>
        <begin position="762"/>
        <end position="1164"/>
    </location>
</feature>
<feature type="domain" description="DAD" evidence="4">
    <location>
        <begin position="1187"/>
        <end position="1215"/>
    </location>
</feature>
<feature type="region of interest" description="Disordered" evidence="7">
    <location>
        <begin position="1"/>
        <end position="42"/>
    </location>
</feature>
<feature type="region of interest" description="Disordered" evidence="7">
    <location>
        <begin position="54"/>
        <end position="83"/>
    </location>
</feature>
<feature type="region of interest" description="Disordered" evidence="7">
    <location>
        <begin position="573"/>
        <end position="742"/>
    </location>
</feature>
<feature type="coiled-coil region" evidence="3">
    <location>
        <begin position="474"/>
        <end position="568"/>
    </location>
</feature>
<feature type="coiled-coil region" evidence="3">
    <location>
        <begin position="1141"/>
        <end position="1185"/>
    </location>
</feature>
<feature type="compositionally biased region" description="Gly residues" evidence="7">
    <location>
        <begin position="1"/>
        <end position="12"/>
    </location>
</feature>
<feature type="compositionally biased region" description="Basic and acidic residues" evidence="7">
    <location>
        <begin position="54"/>
        <end position="65"/>
    </location>
</feature>
<feature type="compositionally biased region" description="Polar residues" evidence="7">
    <location>
        <begin position="67"/>
        <end position="83"/>
    </location>
</feature>
<feature type="compositionally biased region" description="Pro residues" evidence="7">
    <location>
        <begin position="594"/>
        <end position="628"/>
    </location>
</feature>
<feature type="compositionally biased region" description="Pro residues" evidence="7">
    <location>
        <begin position="645"/>
        <end position="742"/>
    </location>
</feature>
<feature type="modified residue" description="N-acetylmethionine" evidence="2">
    <location>
        <position position="1"/>
    </location>
</feature>
<feature type="modified residue" description="Phosphoserine" evidence="2">
    <location>
        <position position="22"/>
    </location>
</feature>
<feature type="modified residue" description="Phosphothreonine" evidence="2">
    <location>
        <position position="761"/>
    </location>
</feature>
<feature type="modified residue" description="N6-acetyllysine" evidence="2">
    <location>
        <position position="1050"/>
    </location>
</feature>
<feature type="modified residue" description="N6-acetyllysine" evidence="2">
    <location>
        <position position="1096"/>
    </location>
</feature>
<feature type="modified residue" description="Phosphotyrosine" evidence="1">
    <location>
        <position position="1114"/>
    </location>
</feature>
<feature type="modified residue" description="Phosphoserine" evidence="2">
    <location>
        <position position="1247"/>
    </location>
</feature>
<keyword id="KW-0007">Acetylation</keyword>
<keyword id="KW-0009">Actin-binding</keyword>
<keyword id="KW-1003">Cell membrane</keyword>
<keyword id="KW-0966">Cell projection</keyword>
<keyword id="KW-0175">Coiled coil</keyword>
<keyword id="KW-0963">Cytoplasm</keyword>
<keyword id="KW-0206">Cytoskeleton</keyword>
<keyword id="KW-1009">Hearing</keyword>
<keyword id="KW-0472">Membrane</keyword>
<keyword id="KW-0539">Nucleus</keyword>
<keyword id="KW-0597">Phosphoprotein</keyword>
<keyword id="KW-1185">Reference proteome</keyword>
<keyword id="KW-0677">Repeat</keyword>
<protein>
    <recommendedName>
        <fullName>Protein diaphanous homolog 1</fullName>
    </recommendedName>
    <alternativeName>
        <fullName>Diaphanous-related formin-1</fullName>
        <shortName>DRF1</shortName>
    </alternativeName>
    <alternativeName>
        <fullName evidence="9">mDIA1</fullName>
    </alternativeName>
</protein>
<organism>
    <name type="scientific">Rattus norvegicus</name>
    <name type="common">Rat</name>
    <dbReference type="NCBI Taxonomy" id="10116"/>
    <lineage>
        <taxon>Eukaryota</taxon>
        <taxon>Metazoa</taxon>
        <taxon>Chordata</taxon>
        <taxon>Craniata</taxon>
        <taxon>Vertebrata</taxon>
        <taxon>Euteleostomi</taxon>
        <taxon>Mammalia</taxon>
        <taxon>Eutheria</taxon>
        <taxon>Euarchontoglires</taxon>
        <taxon>Glires</taxon>
        <taxon>Rodentia</taxon>
        <taxon>Myomorpha</taxon>
        <taxon>Muroidea</taxon>
        <taxon>Muridae</taxon>
        <taxon>Murinae</taxon>
        <taxon>Rattus</taxon>
    </lineage>
</organism>
<comment type="function">
    <text evidence="1 2">Actin nucleation and elongation factor required for the assembly of F-actin structures, such as actin cables and stress fibers. Binds to the barbed end of the actin filament and slows down actin polymerization and depolymerization. Required for cytokinesis, and transcriptional activation of the serum response factor. DFR proteins couple Rho and Src tyrosine kinase during signaling and the regulation of actin dynamics. Functions as a scaffold protein for MAPRE1 and APC to stabilize microtubules and promote cell migration. Has neurite outgrowth promoting activity. Acts in a Rho-dependent manner to recruit PFY1 to the membrane (By similarity). The MEMO1-RHOA-DIAPH1 signaling pathway plays an important role in ERBB2-dependent stabilization of microtubules at the cell cortex. It controls the localization of APC and CLASP2 to the cell membrane, via the regulation of GSK3B activity. In turn, membrane-bound APC allows the localization of the MACF1 to the cell membrane, which is required for microtubule capture and stabilization. Plays a role in the regulation of cell morphology and cytoskeletal organization. Required in the control of cell shape (By similarity). Also acts as an actin nucleation and elongation factor in the nucleus by promoting nuclear actin polymerization inside the nucleus to drive serum-dependent SRF-MRTFA activity (By similarity).</text>
</comment>
<comment type="subunit">
    <text evidence="1 2">Homodimer. Interacts with the GTP-bound form of RHOA. Interacts with RHOC, PFY1, MAPRE1, BAIAP2 and APC. Interacts with SCAI (By similarity). Interacts with DCAF7, via FH2 domain (By similarity). Interacts with NCDN (By similarity). Interacts with OSBPL10, OSBPL2, VIM, TUBB and DYN1 (By similarity).</text>
</comment>
<comment type="subcellular location">
    <subcellularLocation>
        <location evidence="1">Cell membrane</location>
    </subcellularLocation>
    <subcellularLocation>
        <location evidence="1">Cell projection</location>
        <location evidence="1">Ruffle membrane</location>
    </subcellularLocation>
    <subcellularLocation>
        <location evidence="1">Cytoplasm</location>
        <location evidence="1">Cytoskeleton</location>
    </subcellularLocation>
    <subcellularLocation>
        <location evidence="2">Cytoplasm</location>
        <location evidence="2">Cytoskeleton</location>
        <location evidence="2">Microtubule organizing center</location>
        <location evidence="2">Centrosome</location>
    </subcellularLocation>
    <subcellularLocation>
        <location evidence="2">Cytoplasm</location>
        <location evidence="2">Cytoskeleton</location>
        <location evidence="2">Spindle</location>
    </subcellularLocation>
    <subcellularLocation>
        <location evidence="1">Cytoplasm</location>
    </subcellularLocation>
    <subcellularLocation>
        <location evidence="1">Nucleus</location>
    </subcellularLocation>
    <text evidence="1">Membrane ruffles, especially at the tip of ruffles, of motile cells.</text>
</comment>
<comment type="tissue specificity">
    <text evidence="8">Expressed in testis (PubMed:18651670). Present in Sertoli cells (at protein level) (PubMed:18651670).</text>
</comment>
<comment type="domain">
    <text evidence="1">The DAD domain regulates activation via by an autoinhibitory interaction with the GBD/FH3 domain. This autoinhibition is released upon competitive binding of an activated GTPase. The release of DAD allows the FH2 domain to then nucleate and elongate nonbranched actin filaments.</text>
</comment>
<comment type="PTM">
    <text evidence="2">Phosphorylation at Thr-761 is stimulated by cAMP and regulates stability, complex formation and mitochondrial movement (By similarity).</text>
</comment>
<comment type="similarity">
    <text evidence="10">Belongs to the formin homology family. Diaphanous subfamily.</text>
</comment>
<name>DIAP1_RAT</name>